<keyword id="KW-1185">Reference proteome</keyword>
<keyword id="KW-0687">Ribonucleoprotein</keyword>
<keyword id="KW-0689">Ribosomal protein</keyword>
<organism>
    <name type="scientific">Acidiphilium cryptum (strain JF-5)</name>
    <dbReference type="NCBI Taxonomy" id="349163"/>
    <lineage>
        <taxon>Bacteria</taxon>
        <taxon>Pseudomonadati</taxon>
        <taxon>Pseudomonadota</taxon>
        <taxon>Alphaproteobacteria</taxon>
        <taxon>Acetobacterales</taxon>
        <taxon>Acidocellaceae</taxon>
        <taxon>Acidiphilium</taxon>
    </lineage>
</organism>
<protein>
    <recommendedName>
        <fullName evidence="1">Large ribosomal subunit protein bL28</fullName>
    </recommendedName>
    <alternativeName>
        <fullName evidence="3">50S ribosomal protein L28</fullName>
    </alternativeName>
</protein>
<dbReference type="EMBL" id="CP000697">
    <property type="protein sequence ID" value="ABQ31893.1"/>
    <property type="molecule type" value="Genomic_DNA"/>
</dbReference>
<dbReference type="RefSeq" id="WP_007423649.1">
    <property type="nucleotide sequence ID" value="NC_009484.1"/>
</dbReference>
<dbReference type="SMR" id="A5G211"/>
<dbReference type="STRING" id="349163.Acry_2702"/>
<dbReference type="KEGG" id="acr:Acry_2702"/>
<dbReference type="eggNOG" id="COG0227">
    <property type="taxonomic scope" value="Bacteria"/>
</dbReference>
<dbReference type="HOGENOM" id="CLU_064548_4_2_5"/>
<dbReference type="Proteomes" id="UP000000245">
    <property type="component" value="Chromosome"/>
</dbReference>
<dbReference type="GO" id="GO:1990904">
    <property type="term" value="C:ribonucleoprotein complex"/>
    <property type="evidence" value="ECO:0007669"/>
    <property type="project" value="UniProtKB-KW"/>
</dbReference>
<dbReference type="GO" id="GO:0005840">
    <property type="term" value="C:ribosome"/>
    <property type="evidence" value="ECO:0007669"/>
    <property type="project" value="UniProtKB-KW"/>
</dbReference>
<dbReference type="GO" id="GO:0003735">
    <property type="term" value="F:structural constituent of ribosome"/>
    <property type="evidence" value="ECO:0007669"/>
    <property type="project" value="InterPro"/>
</dbReference>
<dbReference type="GO" id="GO:0006412">
    <property type="term" value="P:translation"/>
    <property type="evidence" value="ECO:0007669"/>
    <property type="project" value="UniProtKB-UniRule"/>
</dbReference>
<dbReference type="Gene3D" id="2.30.170.40">
    <property type="entry name" value="Ribosomal protein L28/L24"/>
    <property type="match status" value="1"/>
</dbReference>
<dbReference type="HAMAP" id="MF_00373">
    <property type="entry name" value="Ribosomal_bL28"/>
    <property type="match status" value="1"/>
</dbReference>
<dbReference type="InterPro" id="IPR026569">
    <property type="entry name" value="Ribosomal_bL28"/>
</dbReference>
<dbReference type="InterPro" id="IPR034704">
    <property type="entry name" value="Ribosomal_bL28/bL31-like_sf"/>
</dbReference>
<dbReference type="InterPro" id="IPR001383">
    <property type="entry name" value="Ribosomal_bL28_bact-type"/>
</dbReference>
<dbReference type="InterPro" id="IPR037147">
    <property type="entry name" value="Ribosomal_bL28_sf"/>
</dbReference>
<dbReference type="NCBIfam" id="TIGR00009">
    <property type="entry name" value="L28"/>
    <property type="match status" value="1"/>
</dbReference>
<dbReference type="Pfam" id="PF00830">
    <property type="entry name" value="Ribosomal_L28"/>
    <property type="match status" value="1"/>
</dbReference>
<dbReference type="SUPFAM" id="SSF143800">
    <property type="entry name" value="L28p-like"/>
    <property type="match status" value="1"/>
</dbReference>
<comment type="similarity">
    <text evidence="1">Belongs to the bacterial ribosomal protein bL28 family.</text>
</comment>
<accession>A5G211</accession>
<name>RL28_ACICJ</name>
<gene>
    <name evidence="1" type="primary">rpmB</name>
    <name type="ordered locus">Acry_2702</name>
</gene>
<evidence type="ECO:0000255" key="1">
    <source>
        <dbReference type="HAMAP-Rule" id="MF_00373"/>
    </source>
</evidence>
<evidence type="ECO:0000256" key="2">
    <source>
        <dbReference type="SAM" id="MobiDB-lite"/>
    </source>
</evidence>
<evidence type="ECO:0000305" key="3"/>
<sequence>MTRRCDITGKSVLSGNNVSHANNKSRRRFLPNLQDSALQSDALGHSVKLRVTPRGLATIEQKGGLDAFLLDTPNRKLTDEARTLKRRVAKAAARREAKSA</sequence>
<proteinExistence type="inferred from homology"/>
<feature type="chain" id="PRO_1000007156" description="Large ribosomal subunit protein bL28">
    <location>
        <begin position="1"/>
        <end position="100"/>
    </location>
</feature>
<feature type="region of interest" description="Disordered" evidence="2">
    <location>
        <begin position="1"/>
        <end position="25"/>
    </location>
</feature>
<feature type="compositionally biased region" description="Polar residues" evidence="2">
    <location>
        <begin position="11"/>
        <end position="22"/>
    </location>
</feature>
<reference key="1">
    <citation type="submission" date="2007-05" db="EMBL/GenBank/DDBJ databases">
        <title>Complete sequence of chromosome of Acidiphilium cryptum JF-5.</title>
        <authorList>
            <consortium name="US DOE Joint Genome Institute"/>
            <person name="Copeland A."/>
            <person name="Lucas S."/>
            <person name="Lapidus A."/>
            <person name="Barry K."/>
            <person name="Detter J.C."/>
            <person name="Glavina del Rio T."/>
            <person name="Hammon N."/>
            <person name="Israni S."/>
            <person name="Dalin E."/>
            <person name="Tice H."/>
            <person name="Pitluck S."/>
            <person name="Sims D."/>
            <person name="Brettin T."/>
            <person name="Bruce D."/>
            <person name="Han C."/>
            <person name="Schmutz J."/>
            <person name="Larimer F."/>
            <person name="Land M."/>
            <person name="Hauser L."/>
            <person name="Kyrpides N."/>
            <person name="Kim E."/>
            <person name="Magnuson T."/>
            <person name="Richardson P."/>
        </authorList>
    </citation>
    <scope>NUCLEOTIDE SEQUENCE [LARGE SCALE GENOMIC DNA]</scope>
    <source>
        <strain>JF-5</strain>
    </source>
</reference>